<organismHost>
    <name type="scientific">Aves</name>
    <dbReference type="NCBI Taxonomy" id="8782"/>
</organismHost>
<organismHost>
    <name type="scientific">Equus caballus</name>
    <name type="common">Horse</name>
    <dbReference type="NCBI Taxonomy" id="9796"/>
</organismHost>
<name>NRAM_I69A2</name>
<comment type="function">
    <text evidence="1">Catalyzes the removal of terminal sialic acid residues from viral and cellular glycoconjugates. Cleaves off the terminal sialic acids on the glycosylated HA during virus budding to facilitate virus release. Additionally helps virus spread through the circulation by further removing sialic acids from the cell surface. These cleavages prevent self-aggregation and ensure the efficient spread of the progeny virus from cell to cell. Otherwise, infection would be limited to one round of replication. Described as a receptor-destroying enzyme because it cleaves a terminal sialic acid from the cellular receptors. May facilitate viral invasion of the upper airways by cleaving the sialic acid moieties on the mucin of the airway epithelial cells. Likely to plays a role in the budding process through its association with lipid rafts during intracellular transport. May additionally display a raft-association independent effect on budding. Plays a role in the determination of host range restriction on replication and virulence. Sialidase activity in late endosome/lysosome traffic seems to enhance virus replication.</text>
</comment>
<comment type="catalytic activity">
    <reaction evidence="1">
        <text>Hydrolysis of alpha-(2-&gt;3)-, alpha-(2-&gt;6)-, alpha-(2-&gt;8)- glycosidic linkages of terminal sialic acid residues in oligosaccharides, glycoproteins, glycolipids, colominic acid and synthetic substrates.</text>
        <dbReference type="EC" id="3.2.1.18"/>
    </reaction>
</comment>
<comment type="cofactor">
    <cofactor evidence="1">
        <name>Ca(2+)</name>
        <dbReference type="ChEBI" id="CHEBI:29108"/>
    </cofactor>
</comment>
<comment type="activity regulation">
    <text evidence="1">Inhibited by the neuraminidase inhibitors zanamivir (Relenza) and oseltamivir (Tamiflu). These drugs interfere with the release of progeny virus from infected cells and are effective against all influenza strains. Resistance to neuraminidase inhibitors is quite rare.</text>
</comment>
<comment type="subunit">
    <text evidence="1">Homotetramer.</text>
</comment>
<comment type="subcellular location">
    <subcellularLocation>
        <location evidence="1">Virion membrane</location>
    </subcellularLocation>
    <subcellularLocation>
        <location evidence="1">Host apical cell membrane</location>
        <topology evidence="1">Single-pass type II membrane protein</topology>
    </subcellularLocation>
    <text evidence="1">Preferentially accumulates at the apical plasma membrane in infected polarized epithelial cells, which is the virus assembly site. Uses lipid rafts for cell surface transport and apical sorting. In the virion, forms a mushroom-shaped spike on the surface of the membrane.</text>
</comment>
<comment type="domain">
    <text evidence="1">Intact N-terminus is essential for virion morphogenesis. Possesses two apical sorting signals, one in the ectodomain, which is likely to be a glycan, and the other in the transmembrane domain. The transmembrane domain also plays a role in lipid raft association.</text>
</comment>
<comment type="PTM">
    <text evidence="1">N-glycosylated.</text>
</comment>
<comment type="miscellaneous">
    <text>The influenza A genome consist of 8 RNA segments. Genetic variation of hemagglutinin and/or neuraminidase genes results in the emergence of new influenza strains. The mechanism of variation can be the result of point mutations or the result of genetic reassortment between segments of two different strains.</text>
</comment>
<comment type="similarity">
    <text evidence="1">Belongs to the glycosyl hydrolase 34 family.</text>
</comment>
<feature type="chain" id="PRO_0000078701" description="Neuraminidase">
    <location>
        <begin position="1"/>
        <end position="470"/>
    </location>
</feature>
<feature type="topological domain" description="Intravirion" evidence="1">
    <location>
        <begin position="1"/>
        <end position="14"/>
    </location>
</feature>
<feature type="transmembrane region" description="Helical" evidence="1">
    <location>
        <begin position="15"/>
        <end position="35"/>
    </location>
</feature>
<feature type="topological domain" description="Virion surface" evidence="1">
    <location>
        <begin position="36"/>
        <end position="470"/>
    </location>
</feature>
<feature type="region of interest" description="Involved in apical transport and lipid raft association" evidence="1">
    <location>
        <begin position="11"/>
        <end position="32"/>
    </location>
</feature>
<feature type="region of interest" description="Hypervariable stalk region" evidence="1">
    <location>
        <begin position="32"/>
        <end position="86"/>
    </location>
</feature>
<feature type="region of interest" description="Head of neuraminidase" evidence="1">
    <location>
        <begin position="89"/>
        <end position="470"/>
    </location>
</feature>
<feature type="active site" description="Proton donor/acceptor" evidence="1">
    <location>
        <position position="149"/>
    </location>
</feature>
<feature type="active site" description="Nucleophile" evidence="1">
    <location>
        <position position="402"/>
    </location>
</feature>
<feature type="binding site" evidence="1">
    <location>
        <position position="116"/>
    </location>
    <ligand>
        <name>substrate</name>
    </ligand>
</feature>
<feature type="binding site" evidence="1">
    <location>
        <position position="150"/>
    </location>
    <ligand>
        <name>substrate</name>
    </ligand>
</feature>
<feature type="binding site" evidence="1">
    <location>
        <begin position="275"/>
        <end position="276"/>
    </location>
    <ligand>
        <name>substrate</name>
    </ligand>
</feature>
<feature type="binding site" evidence="1">
    <location>
        <position position="291"/>
    </location>
    <ligand>
        <name>substrate</name>
    </ligand>
</feature>
<feature type="binding site" evidence="1">
    <location>
        <position position="292"/>
    </location>
    <ligand>
        <name>Ca(2+)</name>
        <dbReference type="ChEBI" id="CHEBI:29108"/>
    </ligand>
</feature>
<feature type="binding site" evidence="1">
    <location>
        <position position="296"/>
    </location>
    <ligand>
        <name>Ca(2+)</name>
        <dbReference type="ChEBI" id="CHEBI:29108"/>
    </ligand>
</feature>
<feature type="binding site" evidence="1">
    <location>
        <position position="322"/>
    </location>
    <ligand>
        <name>Ca(2+)</name>
        <dbReference type="ChEBI" id="CHEBI:29108"/>
    </ligand>
</feature>
<feature type="binding site" evidence="1">
    <location>
        <position position="368"/>
    </location>
    <ligand>
        <name>substrate</name>
    </ligand>
</feature>
<feature type="glycosylation site" description="N-linked (GlcNAc...) asparagine; by host" evidence="1">
    <location>
        <position position="39"/>
    </location>
</feature>
<feature type="glycosylation site" description="N-linked (GlcNAc...) asparagine; by host" evidence="1">
    <location>
        <position position="46"/>
    </location>
</feature>
<feature type="glycosylation site" description="N-linked (GlcNAc...) asparagine; by host" evidence="1">
    <location>
        <position position="54"/>
    </location>
</feature>
<feature type="glycosylation site" description="N-linked (GlcNAc...) asparagine; by host" evidence="1">
    <location>
        <position position="144"/>
    </location>
</feature>
<feature type="glycosylation site" description="N-linked (GlcNAc...) asparagine; by host" evidence="1">
    <location>
        <position position="293"/>
    </location>
</feature>
<feature type="glycosylation site" description="N-linked (GlcNAc...) asparagine; by host" evidence="1">
    <location>
        <position position="398"/>
    </location>
</feature>
<feature type="disulfide bond" evidence="1">
    <location>
        <begin position="90"/>
        <end position="417"/>
    </location>
</feature>
<feature type="disulfide bond" evidence="1">
    <location>
        <begin position="122"/>
        <end position="127"/>
    </location>
</feature>
<feature type="disulfide bond" evidence="1">
    <location>
        <begin position="182"/>
        <end position="229"/>
    </location>
</feature>
<feature type="disulfide bond" evidence="1">
    <location>
        <begin position="231"/>
        <end position="236"/>
    </location>
</feature>
<feature type="disulfide bond" evidence="1">
    <location>
        <begin position="277"/>
        <end position="290"/>
    </location>
</feature>
<feature type="disulfide bond" evidence="1">
    <location>
        <begin position="279"/>
        <end position="288"/>
    </location>
</feature>
<feature type="disulfide bond" evidence="1">
    <location>
        <begin position="316"/>
        <end position="335"/>
    </location>
</feature>
<feature type="disulfide bond" evidence="1">
    <location>
        <begin position="421"/>
        <end position="446"/>
    </location>
</feature>
<sequence length="470" mass="52014">MNPNQKIITIGSASLGLVFLNVILHVVSITVTVLVLSNNVTGPNCNGTIIREYNGTVRIERITQWYNTNIIEYIERPSNEYYMSNTEPLCEAQGFAPFSKDNGIRIGSKGHVFVIREPFVSCSPLECRTFFLTQGSLLNDKHSNGTVKDRSPYRTLMSVEVGQSPNVYQARFEAVAWSATACHDGKKWMTVGVTGPDAQAVAVVHYGGVPVDVINSWAGNILRTQESSCTCIKGDCYWVMTDGPANRQAQYKIFKAKDGRIIGQTDVNFNGGHIEECSCYPNEGKVECVCRDNWTGTNRPVLVISPDLSYTVGYLCAGIPTDTPRGEDSQFTGSCTKPLGNQGYGIKGFGFRQGNDVWAGRTISRTSRSGFEIIKIRNGWTQNSKDQIRKQVIVDNLNWSGYSGSFTLPVELTKKGCLVPCFWVEMIRGKPEEITIWTSSSSIVMCGVDHKVASWSWHDGAILPFDIDKM</sequence>
<accession>Q07581</accession>
<proteinExistence type="inferred from homology"/>
<dbReference type="EC" id="3.2.1.18" evidence="1"/>
<dbReference type="EMBL" id="L06582">
    <property type="protein sequence ID" value="AAA43429.1"/>
    <property type="molecule type" value="Genomic_RNA"/>
</dbReference>
<dbReference type="SMR" id="Q07581"/>
<dbReference type="CAZy" id="GH34">
    <property type="family name" value="Glycoside Hydrolase Family 34"/>
</dbReference>
<dbReference type="GlyCosmos" id="Q07581">
    <property type="glycosylation" value="6 sites, No reported glycans"/>
</dbReference>
<dbReference type="GO" id="GO:0020002">
    <property type="term" value="C:host cell plasma membrane"/>
    <property type="evidence" value="ECO:0007669"/>
    <property type="project" value="UniProtKB-SubCell"/>
</dbReference>
<dbReference type="GO" id="GO:0016020">
    <property type="term" value="C:membrane"/>
    <property type="evidence" value="ECO:0007669"/>
    <property type="project" value="UniProtKB-UniRule"/>
</dbReference>
<dbReference type="GO" id="GO:0055036">
    <property type="term" value="C:virion membrane"/>
    <property type="evidence" value="ECO:0007669"/>
    <property type="project" value="UniProtKB-SubCell"/>
</dbReference>
<dbReference type="GO" id="GO:0004308">
    <property type="term" value="F:exo-alpha-sialidase activity"/>
    <property type="evidence" value="ECO:0007669"/>
    <property type="project" value="UniProtKB-UniRule"/>
</dbReference>
<dbReference type="GO" id="GO:0046872">
    <property type="term" value="F:metal ion binding"/>
    <property type="evidence" value="ECO:0007669"/>
    <property type="project" value="UniProtKB-UniRule"/>
</dbReference>
<dbReference type="GO" id="GO:0005975">
    <property type="term" value="P:carbohydrate metabolic process"/>
    <property type="evidence" value="ECO:0007669"/>
    <property type="project" value="InterPro"/>
</dbReference>
<dbReference type="GO" id="GO:0046761">
    <property type="term" value="P:viral budding from plasma membrane"/>
    <property type="evidence" value="ECO:0007669"/>
    <property type="project" value="UniProtKB-UniRule"/>
</dbReference>
<dbReference type="Gene3D" id="2.120.10.10">
    <property type="match status" value="1"/>
</dbReference>
<dbReference type="HAMAP" id="MF_04071">
    <property type="entry name" value="INFV_NRAM"/>
    <property type="match status" value="1"/>
</dbReference>
<dbReference type="InterPro" id="IPR001860">
    <property type="entry name" value="Glyco_hydro_34"/>
</dbReference>
<dbReference type="InterPro" id="IPR036278">
    <property type="entry name" value="Sialidase_sf"/>
</dbReference>
<dbReference type="Pfam" id="PF00064">
    <property type="entry name" value="Neur"/>
    <property type="match status" value="1"/>
</dbReference>
<dbReference type="SUPFAM" id="SSF50939">
    <property type="entry name" value="Sialidases"/>
    <property type="match status" value="1"/>
</dbReference>
<reference key="1">
    <citation type="journal article" date="1993" name="Virology">
        <title>Phylogenetic analysis of the N8 neuraminidase gene of influenza A viruses.</title>
        <authorList>
            <person name="Saito T."/>
            <person name="Kawaoka Y."/>
            <person name="Webster R.G."/>
        </authorList>
    </citation>
    <scope>NUCLEOTIDE SEQUENCE [GENOMIC RNA]</scope>
</reference>
<reference key="2">
    <citation type="journal article" date="2004" name="Virus Res.">
        <title>Assembly and budding of influenza virus.</title>
        <authorList>
            <person name="Nayak D.P."/>
            <person name="Hui E.K."/>
            <person name="Barman S."/>
        </authorList>
    </citation>
    <scope>REVIEW</scope>
</reference>
<reference key="3">
    <citation type="journal article" date="2005" name="N. Engl. J. Med.">
        <title>Neuraminidase inhibitors for influenza.</title>
        <authorList>
            <person name="Moscona A."/>
        </authorList>
    </citation>
    <scope>REVIEW</scope>
</reference>
<reference key="4">
    <citation type="journal article" date="2005" name="Biol. Pharm. Bull.">
        <title>Sialobiology of influenza: molecular mechanism of host range variation of influenza viruses.</title>
        <authorList>
            <person name="Suzuki Y."/>
        </authorList>
    </citation>
    <scope>REVIEW</scope>
</reference>
<keyword id="KW-0106">Calcium</keyword>
<keyword id="KW-1015">Disulfide bond</keyword>
<keyword id="KW-0325">Glycoprotein</keyword>
<keyword id="KW-0326">Glycosidase</keyword>
<keyword id="KW-1032">Host cell membrane</keyword>
<keyword id="KW-1043">Host membrane</keyword>
<keyword id="KW-0378">Hydrolase</keyword>
<keyword id="KW-0472">Membrane</keyword>
<keyword id="KW-0479">Metal-binding</keyword>
<keyword id="KW-0735">Signal-anchor</keyword>
<keyword id="KW-0812">Transmembrane</keyword>
<keyword id="KW-1133">Transmembrane helix</keyword>
<keyword id="KW-0946">Virion</keyword>
<protein>
    <recommendedName>
        <fullName evidence="1">Neuraminidase</fullName>
        <ecNumber evidence="1">3.2.1.18</ecNumber>
    </recommendedName>
</protein>
<gene>
    <name evidence="1" type="primary">NA</name>
</gene>
<evidence type="ECO:0000255" key="1">
    <source>
        <dbReference type="HAMAP-Rule" id="MF_04071"/>
    </source>
</evidence>
<organism>
    <name type="scientific">Influenza A virus (strain A/Equine/Sao Paulo/6/1969 H3N8)</name>
    <dbReference type="NCBI Taxonomy" id="387231"/>
    <lineage>
        <taxon>Viruses</taxon>
        <taxon>Riboviria</taxon>
        <taxon>Orthornavirae</taxon>
        <taxon>Negarnaviricota</taxon>
        <taxon>Polyploviricotina</taxon>
        <taxon>Insthoviricetes</taxon>
        <taxon>Articulavirales</taxon>
        <taxon>Orthomyxoviridae</taxon>
        <taxon>Alphainfluenzavirus</taxon>
        <taxon>Alphainfluenzavirus influenzae</taxon>
        <taxon>Influenza A virus</taxon>
    </lineage>
</organism>